<dbReference type="EC" id="3.6.4.13"/>
<dbReference type="EMBL" id="AAEY01000001">
    <property type="protein sequence ID" value="EAL23502.1"/>
    <property type="molecule type" value="Genomic_DNA"/>
</dbReference>
<dbReference type="RefSeq" id="XP_778149.1">
    <property type="nucleotide sequence ID" value="XM_773056.1"/>
</dbReference>
<dbReference type="SMR" id="P0CR03"/>
<dbReference type="GeneID" id="4933400"/>
<dbReference type="KEGG" id="cnb:CNBA1490"/>
<dbReference type="VEuPathDB" id="FungiDB:CNBA1490"/>
<dbReference type="HOGENOM" id="CLU_003041_1_1_1"/>
<dbReference type="OrthoDB" id="6917at5206"/>
<dbReference type="GO" id="GO:0005829">
    <property type="term" value="C:cytosol"/>
    <property type="evidence" value="ECO:0007669"/>
    <property type="project" value="TreeGrafter"/>
</dbReference>
<dbReference type="GO" id="GO:0005730">
    <property type="term" value="C:nucleolus"/>
    <property type="evidence" value="ECO:0007669"/>
    <property type="project" value="UniProtKB-SubCell"/>
</dbReference>
<dbReference type="GO" id="GO:0005524">
    <property type="term" value="F:ATP binding"/>
    <property type="evidence" value="ECO:0007669"/>
    <property type="project" value="UniProtKB-KW"/>
</dbReference>
<dbReference type="GO" id="GO:0016887">
    <property type="term" value="F:ATP hydrolysis activity"/>
    <property type="evidence" value="ECO:0007669"/>
    <property type="project" value="RHEA"/>
</dbReference>
<dbReference type="GO" id="GO:0003723">
    <property type="term" value="F:RNA binding"/>
    <property type="evidence" value="ECO:0007669"/>
    <property type="project" value="UniProtKB-KW"/>
</dbReference>
<dbReference type="GO" id="GO:0003724">
    <property type="term" value="F:RNA helicase activity"/>
    <property type="evidence" value="ECO:0007669"/>
    <property type="project" value="UniProtKB-EC"/>
</dbReference>
<dbReference type="GO" id="GO:0006364">
    <property type="term" value="P:rRNA processing"/>
    <property type="evidence" value="ECO:0007669"/>
    <property type="project" value="UniProtKB-KW"/>
</dbReference>
<dbReference type="CDD" id="cd17955">
    <property type="entry name" value="DEADc_DDX49"/>
    <property type="match status" value="1"/>
</dbReference>
<dbReference type="CDD" id="cd18787">
    <property type="entry name" value="SF2_C_DEAD"/>
    <property type="match status" value="1"/>
</dbReference>
<dbReference type="Gene3D" id="3.40.50.300">
    <property type="entry name" value="P-loop containing nucleotide triphosphate hydrolases"/>
    <property type="match status" value="2"/>
</dbReference>
<dbReference type="InterPro" id="IPR011545">
    <property type="entry name" value="DEAD/DEAH_box_helicase_dom"/>
</dbReference>
<dbReference type="InterPro" id="IPR050079">
    <property type="entry name" value="DEAD_box_RNA_helicase"/>
</dbReference>
<dbReference type="InterPro" id="IPR014001">
    <property type="entry name" value="Helicase_ATP-bd"/>
</dbReference>
<dbReference type="InterPro" id="IPR001650">
    <property type="entry name" value="Helicase_C-like"/>
</dbReference>
<dbReference type="InterPro" id="IPR027417">
    <property type="entry name" value="P-loop_NTPase"/>
</dbReference>
<dbReference type="InterPro" id="IPR000629">
    <property type="entry name" value="RNA-helicase_DEAD-box_CS"/>
</dbReference>
<dbReference type="InterPro" id="IPR014014">
    <property type="entry name" value="RNA_helicase_DEAD_Q_motif"/>
</dbReference>
<dbReference type="PANTHER" id="PTHR47959:SF24">
    <property type="entry name" value="ATP-DEPENDENT RNA HELICASE"/>
    <property type="match status" value="1"/>
</dbReference>
<dbReference type="PANTHER" id="PTHR47959">
    <property type="entry name" value="ATP-DEPENDENT RNA HELICASE RHLE-RELATED"/>
    <property type="match status" value="1"/>
</dbReference>
<dbReference type="Pfam" id="PF00270">
    <property type="entry name" value="DEAD"/>
    <property type="match status" value="1"/>
</dbReference>
<dbReference type="Pfam" id="PF00271">
    <property type="entry name" value="Helicase_C"/>
    <property type="match status" value="1"/>
</dbReference>
<dbReference type="SMART" id="SM00487">
    <property type="entry name" value="DEXDc"/>
    <property type="match status" value="1"/>
</dbReference>
<dbReference type="SMART" id="SM00490">
    <property type="entry name" value="HELICc"/>
    <property type="match status" value="1"/>
</dbReference>
<dbReference type="SUPFAM" id="SSF52540">
    <property type="entry name" value="P-loop containing nucleoside triphosphate hydrolases"/>
    <property type="match status" value="2"/>
</dbReference>
<dbReference type="PROSITE" id="PS00039">
    <property type="entry name" value="DEAD_ATP_HELICASE"/>
    <property type="match status" value="1"/>
</dbReference>
<dbReference type="PROSITE" id="PS51192">
    <property type="entry name" value="HELICASE_ATP_BIND_1"/>
    <property type="match status" value="1"/>
</dbReference>
<dbReference type="PROSITE" id="PS51194">
    <property type="entry name" value="HELICASE_CTER"/>
    <property type="match status" value="1"/>
</dbReference>
<dbReference type="PROSITE" id="PS51195">
    <property type="entry name" value="Q_MOTIF"/>
    <property type="match status" value="1"/>
</dbReference>
<reference key="1">
    <citation type="journal article" date="2005" name="Science">
        <title>The genome of the basidiomycetous yeast and human pathogen Cryptococcus neoformans.</title>
        <authorList>
            <person name="Loftus B.J."/>
            <person name="Fung E."/>
            <person name="Roncaglia P."/>
            <person name="Rowley D."/>
            <person name="Amedeo P."/>
            <person name="Bruno D."/>
            <person name="Vamathevan J."/>
            <person name="Miranda M."/>
            <person name="Anderson I.J."/>
            <person name="Fraser J.A."/>
            <person name="Allen J.E."/>
            <person name="Bosdet I.E."/>
            <person name="Brent M.R."/>
            <person name="Chiu R."/>
            <person name="Doering T.L."/>
            <person name="Donlin M.J."/>
            <person name="D'Souza C.A."/>
            <person name="Fox D.S."/>
            <person name="Grinberg V."/>
            <person name="Fu J."/>
            <person name="Fukushima M."/>
            <person name="Haas B.J."/>
            <person name="Huang J.C."/>
            <person name="Janbon G."/>
            <person name="Jones S.J.M."/>
            <person name="Koo H.L."/>
            <person name="Krzywinski M.I."/>
            <person name="Kwon-Chung K.J."/>
            <person name="Lengeler K.B."/>
            <person name="Maiti R."/>
            <person name="Marra M.A."/>
            <person name="Marra R.E."/>
            <person name="Mathewson C.A."/>
            <person name="Mitchell T.G."/>
            <person name="Pertea M."/>
            <person name="Riggs F.R."/>
            <person name="Salzberg S.L."/>
            <person name="Schein J.E."/>
            <person name="Shvartsbeyn A."/>
            <person name="Shin H."/>
            <person name="Shumway M."/>
            <person name="Specht C.A."/>
            <person name="Suh B.B."/>
            <person name="Tenney A."/>
            <person name="Utterback T.R."/>
            <person name="Wickes B.L."/>
            <person name="Wortman J.R."/>
            <person name="Wye N.H."/>
            <person name="Kronstad J.W."/>
            <person name="Lodge J.K."/>
            <person name="Heitman J."/>
            <person name="Davis R.W."/>
            <person name="Fraser C.M."/>
            <person name="Hyman R.W."/>
        </authorList>
    </citation>
    <scope>NUCLEOTIDE SEQUENCE [LARGE SCALE GENOMIC DNA]</scope>
    <source>
        <strain>B-3501A</strain>
    </source>
</reference>
<accession>P0CR03</accession>
<accession>Q560U1</accession>
<accession>Q5KPU1</accession>
<evidence type="ECO:0000250" key="1"/>
<evidence type="ECO:0000255" key="2">
    <source>
        <dbReference type="PROSITE-ProRule" id="PRU00541"/>
    </source>
</evidence>
<evidence type="ECO:0000255" key="3">
    <source>
        <dbReference type="PROSITE-ProRule" id="PRU00542"/>
    </source>
</evidence>
<evidence type="ECO:0000256" key="4">
    <source>
        <dbReference type="SAM" id="MobiDB-lite"/>
    </source>
</evidence>
<evidence type="ECO:0000305" key="5"/>
<keyword id="KW-0067">ATP-binding</keyword>
<keyword id="KW-0347">Helicase</keyword>
<keyword id="KW-0378">Hydrolase</keyword>
<keyword id="KW-0547">Nucleotide-binding</keyword>
<keyword id="KW-0539">Nucleus</keyword>
<keyword id="KW-0690">Ribosome biogenesis</keyword>
<keyword id="KW-0694">RNA-binding</keyword>
<keyword id="KW-0698">rRNA processing</keyword>
<organism>
    <name type="scientific">Cryptococcus neoformans var. neoformans serotype D (strain B-3501A)</name>
    <name type="common">Filobasidiella neoformans</name>
    <dbReference type="NCBI Taxonomy" id="283643"/>
    <lineage>
        <taxon>Eukaryota</taxon>
        <taxon>Fungi</taxon>
        <taxon>Dikarya</taxon>
        <taxon>Basidiomycota</taxon>
        <taxon>Agaricomycotina</taxon>
        <taxon>Tremellomycetes</taxon>
        <taxon>Tremellales</taxon>
        <taxon>Cryptococcaceae</taxon>
        <taxon>Cryptococcus</taxon>
        <taxon>Cryptococcus neoformans species complex</taxon>
    </lineage>
</organism>
<comment type="function">
    <text evidence="1">ATP-binding RNA helicase involved in 40S ribosomal subunit biogenesis and is required for the normal formation of 18S rRNAs through pre-rRNA processing at A0, A1 and A2 sites. Required for vegetative growth (By similarity).</text>
</comment>
<comment type="catalytic activity">
    <reaction>
        <text>ATP + H2O = ADP + phosphate + H(+)</text>
        <dbReference type="Rhea" id="RHEA:13065"/>
        <dbReference type="ChEBI" id="CHEBI:15377"/>
        <dbReference type="ChEBI" id="CHEBI:15378"/>
        <dbReference type="ChEBI" id="CHEBI:30616"/>
        <dbReference type="ChEBI" id="CHEBI:43474"/>
        <dbReference type="ChEBI" id="CHEBI:456216"/>
        <dbReference type="EC" id="3.6.4.13"/>
    </reaction>
</comment>
<comment type="subcellular location">
    <subcellularLocation>
        <location evidence="1">Nucleus</location>
        <location evidence="1">Nucleolus</location>
    </subcellularLocation>
</comment>
<comment type="domain">
    <text>The Q motif is unique to and characteristic of the DEAD box family of RNA helicases and controls ATP binding and hydrolysis.</text>
</comment>
<comment type="similarity">
    <text evidence="5">Belongs to the DEAD box helicase family. DDX49/DBP8 subfamily.</text>
</comment>
<sequence>MAVSKKSRKSEPSAAFTAADGLVLDQSEIMRAMLAAQKGKQKEESEGNDESDEEDDDVSNEGEDEGESSGSEAESSVAAQRNLKRRRSLSFELDAEGEEDKENEESEPRPQPSSGAGMLSRTALATKDMTPKPRSKPQPNGLPSASKPSADVTFESLGLSRPLITALASINIKKPTEIQAACVEPILSGRDCIGGAKTGSGKTMAFALPIVERIARDPFGVWAVVLTPTRELAYQLSEQFLVIGKPLGLTTATIVGGMDMMKQAQELEARPHIIVATPGRLCDLLRSGGVGPGKLSRVRTLVLDEADRMLTPSFAPELAYLFSQIPAKRQTCLFTATVSEAIMELANKEPPAGKQRPFVYRVASDTLTVSNLKQKYLFIPSQIRDPYLLYILQNPLEDIDVALRVDPKKAKAREREAALGKKGKKPKQAKEEEDAPSVPSTVIFTQRCATAHLLHLLLNSLDIPSVPLHSHLTQPQRLLSLARFRAHEVPVLVTTDVGSRGLDIPEVAMVINWDCPRRSDDYVHRVGRTARAGRGGVAVTIITERDTELVKIIEDEVNVRLEELKLDEDKVLEGLNKVSLARRMATMEMHDSGFGERQATNKAKQIKRMKRDAAAAGKA</sequence>
<proteinExistence type="inferred from homology"/>
<name>DBP8_CRYNB</name>
<feature type="chain" id="PRO_0000410262" description="ATP-dependent RNA helicase DBP8">
    <location>
        <begin position="1"/>
        <end position="619"/>
    </location>
</feature>
<feature type="domain" description="Helicase ATP-binding" evidence="2">
    <location>
        <begin position="183"/>
        <end position="356"/>
    </location>
</feature>
<feature type="domain" description="Helicase C-terminal" evidence="3">
    <location>
        <begin position="430"/>
        <end position="572"/>
    </location>
</feature>
<feature type="region of interest" description="Disordered" evidence="4">
    <location>
        <begin position="1"/>
        <end position="149"/>
    </location>
</feature>
<feature type="region of interest" description="Disordered" evidence="4">
    <location>
        <begin position="414"/>
        <end position="436"/>
    </location>
</feature>
<feature type="short sequence motif" description="Q motif">
    <location>
        <begin position="152"/>
        <end position="180"/>
    </location>
</feature>
<feature type="short sequence motif" description="DEAD box">
    <location>
        <begin position="304"/>
        <end position="307"/>
    </location>
</feature>
<feature type="compositionally biased region" description="Acidic residues" evidence="4">
    <location>
        <begin position="46"/>
        <end position="67"/>
    </location>
</feature>
<feature type="compositionally biased region" description="Low complexity" evidence="4">
    <location>
        <begin position="68"/>
        <end position="78"/>
    </location>
</feature>
<feature type="compositionally biased region" description="Acidic residues" evidence="4">
    <location>
        <begin position="93"/>
        <end position="105"/>
    </location>
</feature>
<feature type="compositionally biased region" description="Polar residues" evidence="4">
    <location>
        <begin position="137"/>
        <end position="147"/>
    </location>
</feature>
<feature type="binding site" evidence="2">
    <location>
        <begin position="196"/>
        <end position="203"/>
    </location>
    <ligand>
        <name>ATP</name>
        <dbReference type="ChEBI" id="CHEBI:30616"/>
    </ligand>
</feature>
<protein>
    <recommendedName>
        <fullName>ATP-dependent RNA helicase DBP8</fullName>
        <ecNumber>3.6.4.13</ecNumber>
    </recommendedName>
</protein>
<gene>
    <name type="primary">DBP8</name>
    <name type="ordered locus">CNBA1490</name>
</gene>